<proteinExistence type="evidence at protein level"/>
<accession>Q09JW3</accession>
<evidence type="ECO:0000250" key="1">
    <source>
        <dbReference type="UniProtKB" id="Q8MVZ2"/>
    </source>
</evidence>
<evidence type="ECO:0000255" key="2"/>
<evidence type="ECO:0000255" key="3">
    <source>
        <dbReference type="PROSITE-ProRule" id="PRU00031"/>
    </source>
</evidence>
<evidence type="ECO:0000269" key="4">
    <source>
    </source>
</evidence>
<evidence type="ECO:0000303" key="5">
    <source>
    </source>
</evidence>
<evidence type="ECO:0000303" key="6">
    <source>
    </source>
</evidence>
<evidence type="ECO:0000305" key="7"/>
<evidence type="ECO:0000305" key="8">
    <source>
    </source>
</evidence>
<evidence type="ECO:0000305" key="9">
    <source>
    </source>
</evidence>
<evidence type="ECO:0000312" key="10">
    <source>
        <dbReference type="EMBL" id="ABI52650.1"/>
    </source>
</evidence>
<name>KUNP2_ARGMO</name>
<protein>
    <recommendedName>
        <fullName evidence="5">Monogrin 2</fullName>
        <shortName evidence="5">MG2</shortName>
    </recommendedName>
    <alternativeName>
        <fullName evidence="10">Monogrin 1B</fullName>
    </alternativeName>
    <alternativeName>
        <fullName evidence="5">Platelet aggregation inhibitor</fullName>
        <shortName evidence="7">PAI</shortName>
    </alternativeName>
</protein>
<keyword id="KW-0968">Cytoplasmic vesicle</keyword>
<keyword id="KW-1015">Disulfide bond</keyword>
<keyword id="KW-1199">Hemostasis impairing toxin</keyword>
<keyword id="KW-1201">Platelet aggregation inhibiting toxin</keyword>
<keyword id="KW-0646">Protease inhibitor</keyword>
<keyword id="KW-0964">Secreted</keyword>
<keyword id="KW-0722">Serine protease inhibitor</keyword>
<keyword id="KW-0732">Signal</keyword>
<keyword id="KW-0800">Toxin</keyword>
<gene>
    <name evidence="5 6" type="ORF">AM-30B</name>
</gene>
<feature type="signal peptide" evidence="2">
    <location>
        <begin position="1"/>
        <end position="20"/>
    </location>
</feature>
<feature type="chain" id="PRO_5004167643" description="Monogrin 2" evidence="8">
    <location>
        <begin position="21"/>
        <end position="107"/>
    </location>
</feature>
<feature type="domain" description="BPTI/Kunitz inhibitor" evidence="3">
    <location>
        <begin position="29"/>
        <end position="82"/>
    </location>
</feature>
<feature type="short sequence motif" description="Cell attachment site" evidence="8">
    <location>
        <begin position="37"/>
        <end position="39"/>
    </location>
</feature>
<feature type="disulfide bond" evidence="8">
    <location>
        <begin position="28"/>
        <end position="82"/>
    </location>
</feature>
<feature type="disulfide bond" evidence="8">
    <location>
        <begin position="36"/>
        <end position="62"/>
    </location>
</feature>
<feature type="disulfide bond" evidence="3 8">
    <location>
        <begin position="55"/>
        <end position="78"/>
    </location>
</feature>
<comment type="function">
    <text evidence="4">Tick salivary platelet aggregation inhibitor that plays an important part in the anti-hemostatic strategy of ticks. Inhibits platelet aggregation induced by ADP (IC(50)~150 nM), collagen, and platelet activating factor (PAF) (PubMed:18070663). Acts by binding to platelet membrane glycoprotein IIb-IIIa (ITGA2B/ITGB3) in a metal ion dependent manner (PubMed:18070663). Does not inhibit aggregation induced by ristocecin, an agonist that aggregates platelets independently from the glycoprotein IIb-IIIa (ITGA2B/ITGB3). In contrast to other tick platelet aggregation inhibitors, this protein does not protect ITGA2B/ITGB3 from dissociation under SDS condition, suggesting it may dissocate much faster than its orthologs (PubMed:18070663).</text>
</comment>
<comment type="subcellular location">
    <subcellularLocation>
        <location evidence="1">Cytoplasmic vesicle</location>
        <location evidence="1">Secretory vesicle</location>
    </subcellularLocation>
    <subcellularLocation>
        <location evidence="8">Secreted</location>
    </subcellularLocation>
</comment>
<comment type="tissue specificity">
    <text evidence="8 9">Expressed in salivary glands.</text>
</comment>
<comment type="PTM">
    <text evidence="4">The N-terminus is blocked.</text>
</comment>
<comment type="mass spectrometry"/>
<comment type="miscellaneous">
    <text evidence="4">The monogrins comprise about 4% of the total salivary gland protein.</text>
</comment>
<sequence>MEGKVLLCFALLLPFTVAQAAKGDTRRCGYLMMQRCRGDTTETKAWGFNYEEKKCQKETVICGTGGAPRNAFETKKDCDALCKGYSGPQYSMQEMLQHIRDNAKKTG</sequence>
<reference evidence="10" key="1">
    <citation type="journal article" date="2008" name="Insect Biochem. Mol. Biol.">
        <title>Characterization of anti-hemostatic factors in the argasid, Argas monolakensis: implications for the evolution of blood-feeding in the soft tick family.</title>
        <authorList>
            <person name="Mans B.J."/>
            <person name="Andersen J.F."/>
            <person name="Schwan T.G."/>
            <person name="Ribeiro J.M."/>
        </authorList>
    </citation>
    <scope>NUCLEOTIDE SEQUENCE [MRNA]</scope>
    <scope>MASS SPECTROMETRY</scope>
    <scope>IDENTIFICATION BY MASS SPECTROMETRY</scope>
    <source>
        <tissue>Salivary gland</tissue>
    </source>
</reference>
<reference evidence="10" key="2">
    <citation type="journal article" date="2008" name="Insect Biochem. Mol. Biol.">
        <title>Comparative sialomics between hard and soft ticks: implications for the evolution of blood-feeding behavior.</title>
        <authorList>
            <person name="Mans B.J."/>
            <person name="Andersen J.F."/>
            <person name="Francischetti I.M."/>
            <person name="Valenzuela J.G."/>
            <person name="Schwan T.G."/>
            <person name="Pham V.M."/>
            <person name="Garfield M.K."/>
            <person name="Hammer C.H."/>
            <person name="Ribeiro J.M.C."/>
        </authorList>
    </citation>
    <scope>NUCLEOTIDE SEQUENCE [LARGE SCALE MRNA]</scope>
    <source>
        <tissue>Salivary gland</tissue>
    </source>
</reference>
<dbReference type="EMBL" id="DQ886733">
    <property type="protein sequence ID" value="ABI52650.1"/>
    <property type="molecule type" value="mRNA"/>
</dbReference>
<dbReference type="SMR" id="Q09JW3"/>
<dbReference type="GO" id="GO:0005576">
    <property type="term" value="C:extracellular region"/>
    <property type="evidence" value="ECO:0007669"/>
    <property type="project" value="UniProtKB-SubCell"/>
</dbReference>
<dbReference type="GO" id="GO:0030133">
    <property type="term" value="C:transport vesicle"/>
    <property type="evidence" value="ECO:0007669"/>
    <property type="project" value="UniProtKB-SubCell"/>
</dbReference>
<dbReference type="GO" id="GO:0004867">
    <property type="term" value="F:serine-type endopeptidase inhibitor activity"/>
    <property type="evidence" value="ECO:0007669"/>
    <property type="project" value="UniProtKB-KW"/>
</dbReference>
<dbReference type="GO" id="GO:0090729">
    <property type="term" value="F:toxin activity"/>
    <property type="evidence" value="ECO:0007669"/>
    <property type="project" value="UniProtKB-KW"/>
</dbReference>
<dbReference type="Gene3D" id="4.10.410.10">
    <property type="entry name" value="Pancreatic trypsin inhibitor Kunitz domain"/>
    <property type="match status" value="1"/>
</dbReference>
<dbReference type="InterPro" id="IPR036880">
    <property type="entry name" value="Kunitz_BPTI_sf"/>
</dbReference>
<dbReference type="SUPFAM" id="SSF57362">
    <property type="entry name" value="BPTI-like"/>
    <property type="match status" value="1"/>
</dbReference>
<organism>
    <name type="scientific">Argas monolakensis</name>
    <name type="common">Mono lake bird tick</name>
    <dbReference type="NCBI Taxonomy" id="34602"/>
    <lineage>
        <taxon>Eukaryota</taxon>
        <taxon>Metazoa</taxon>
        <taxon>Ecdysozoa</taxon>
        <taxon>Arthropoda</taxon>
        <taxon>Chelicerata</taxon>
        <taxon>Arachnida</taxon>
        <taxon>Acari</taxon>
        <taxon>Parasitiformes</taxon>
        <taxon>Ixodida</taxon>
        <taxon>Ixodoidea</taxon>
        <taxon>Argasidae</taxon>
        <taxon>Argasinae</taxon>
        <taxon>Argas</taxon>
    </lineage>
</organism>